<name>NADM_METTI</name>
<reference key="1">
    <citation type="journal article" date="1999" name="FEMS Microbiol. Lett.">
        <title>The F420H2-dehydrogenase from Methanolobus tindarius: cloning of the ffd operon and expression of the genes in Escherichia coli.</title>
        <authorList>
            <person name="Westenberg D.J."/>
            <person name="Braune A."/>
            <person name="Ruppert C."/>
            <person name="Mueller V."/>
            <person name="Herzberg C."/>
            <person name="Gottschalk G."/>
            <person name="Blaut M."/>
        </authorList>
    </citation>
    <scope>NUCLEOTIDE SEQUENCE [GENOMIC DNA]</scope>
    <source>
        <strain>ATCC 35996 / DSM 2278 / OCM 150 / Tindari 3</strain>
    </source>
</reference>
<sequence>MRRAFYIGRFQPFHLGHYSLIKDIARDADEVVIGIGSAQKSHEPKNPFTAGERVMMIKHALEDAGIKHYAIPLEDLQRNAVWVSHIISMTPPFDVVYSNNPLVVRLFQESGILVEQPPMYQREGYSGSEIRKRMLRGEDWKSLVPAAVIDVIDEIDGVNRLKSVSKSDKDYRD</sequence>
<gene>
    <name type="primary">ffdC</name>
</gene>
<accession>Q9UXN8</accession>
<proteinExistence type="inferred from homology"/>
<dbReference type="EC" id="2.7.7.1"/>
<dbReference type="EMBL" id="AJ011519">
    <property type="protein sequence ID" value="CAB56641.1"/>
    <property type="status" value="ALT_INIT"/>
    <property type="molecule type" value="Genomic_DNA"/>
</dbReference>
<dbReference type="PIR" id="T45228">
    <property type="entry name" value="T45228"/>
</dbReference>
<dbReference type="RefSeq" id="WP_048135196.1">
    <property type="nucleotide sequence ID" value="NZ_CP146979.1"/>
</dbReference>
<dbReference type="SMR" id="Q9UXN8"/>
<dbReference type="UniPathway" id="UPA00253">
    <property type="reaction ID" value="UER00600"/>
</dbReference>
<dbReference type="GO" id="GO:0005737">
    <property type="term" value="C:cytoplasm"/>
    <property type="evidence" value="ECO:0007669"/>
    <property type="project" value="UniProtKB-SubCell"/>
</dbReference>
<dbReference type="GO" id="GO:0005524">
    <property type="term" value="F:ATP binding"/>
    <property type="evidence" value="ECO:0007669"/>
    <property type="project" value="UniProtKB-KW"/>
</dbReference>
<dbReference type="GO" id="GO:0000309">
    <property type="term" value="F:nicotinamide-nucleotide adenylyltransferase activity"/>
    <property type="evidence" value="ECO:0007669"/>
    <property type="project" value="UniProtKB-UniRule"/>
</dbReference>
<dbReference type="GO" id="GO:0009435">
    <property type="term" value="P:NAD biosynthetic process"/>
    <property type="evidence" value="ECO:0007669"/>
    <property type="project" value="UniProtKB-UniRule"/>
</dbReference>
<dbReference type="CDD" id="cd02166">
    <property type="entry name" value="NMNAT_Archaea"/>
    <property type="match status" value="1"/>
</dbReference>
<dbReference type="Gene3D" id="3.40.50.620">
    <property type="entry name" value="HUPs"/>
    <property type="match status" value="1"/>
</dbReference>
<dbReference type="HAMAP" id="MF_00243">
    <property type="entry name" value="NMN_adenylyltr"/>
    <property type="match status" value="1"/>
</dbReference>
<dbReference type="InterPro" id="IPR004821">
    <property type="entry name" value="Cyt_trans-like"/>
</dbReference>
<dbReference type="InterPro" id="IPR006418">
    <property type="entry name" value="NMN_Atrans_arc"/>
</dbReference>
<dbReference type="InterPro" id="IPR014729">
    <property type="entry name" value="Rossmann-like_a/b/a_fold"/>
</dbReference>
<dbReference type="NCBIfam" id="TIGR01527">
    <property type="entry name" value="arch_NMN_Atrans"/>
    <property type="match status" value="1"/>
</dbReference>
<dbReference type="NCBIfam" id="TIGR00125">
    <property type="entry name" value="cyt_tran_rel"/>
    <property type="match status" value="1"/>
</dbReference>
<dbReference type="NCBIfam" id="NF002243">
    <property type="entry name" value="PRK01153.1"/>
    <property type="match status" value="1"/>
</dbReference>
<dbReference type="PANTHER" id="PTHR21342:SF0">
    <property type="entry name" value="BIFUNCTIONAL NMN ADENYLYLTRANSFERASE_NUDIX HYDROLASE"/>
    <property type="match status" value="1"/>
</dbReference>
<dbReference type="PANTHER" id="PTHR21342">
    <property type="entry name" value="PHOSPHOPANTETHEINE ADENYLYLTRANSFERASE"/>
    <property type="match status" value="1"/>
</dbReference>
<dbReference type="Pfam" id="PF01467">
    <property type="entry name" value="CTP_transf_like"/>
    <property type="match status" value="1"/>
</dbReference>
<dbReference type="SUPFAM" id="SSF52374">
    <property type="entry name" value="Nucleotidylyl transferase"/>
    <property type="match status" value="1"/>
</dbReference>
<protein>
    <recommendedName>
        <fullName>Nicotinamide-nucleotide adenylyltransferase</fullName>
        <ecNumber>2.7.7.1</ecNumber>
    </recommendedName>
    <alternativeName>
        <fullName>NAD(+) diphosphorylase</fullName>
    </alternativeName>
    <alternativeName>
        <fullName>NAD(+) pyrophosphorylase</fullName>
    </alternativeName>
    <alternativeName>
        <fullName>NMN adenylyltransferase</fullName>
    </alternativeName>
</protein>
<feature type="chain" id="PRO_0000134996" description="Nicotinamide-nucleotide adenylyltransferase">
    <location>
        <begin position="1"/>
        <end position="173"/>
    </location>
</feature>
<organism>
    <name type="scientific">Methanolobus tindarius</name>
    <dbReference type="NCBI Taxonomy" id="2221"/>
    <lineage>
        <taxon>Archaea</taxon>
        <taxon>Methanobacteriati</taxon>
        <taxon>Methanobacteriota</taxon>
        <taxon>Stenosarchaea group</taxon>
        <taxon>Methanomicrobia</taxon>
        <taxon>Methanosarcinales</taxon>
        <taxon>Methanosarcinaceae</taxon>
        <taxon>Methanolobus</taxon>
    </lineage>
</organism>
<comment type="catalytic activity">
    <reaction>
        <text>beta-nicotinamide D-ribonucleotide + ATP + H(+) = diphosphate + NAD(+)</text>
        <dbReference type="Rhea" id="RHEA:21360"/>
        <dbReference type="ChEBI" id="CHEBI:14649"/>
        <dbReference type="ChEBI" id="CHEBI:15378"/>
        <dbReference type="ChEBI" id="CHEBI:30616"/>
        <dbReference type="ChEBI" id="CHEBI:33019"/>
        <dbReference type="ChEBI" id="CHEBI:57540"/>
        <dbReference type="EC" id="2.7.7.1"/>
    </reaction>
</comment>
<comment type="pathway">
    <text>Cofactor biosynthesis; NAD(+) biosynthesis; NAD(+) from nicotinamide D-ribonucleotide: step 1/1.</text>
</comment>
<comment type="subcellular location">
    <subcellularLocation>
        <location evidence="1">Cytoplasm</location>
    </subcellularLocation>
</comment>
<comment type="similarity">
    <text evidence="2">Belongs to the archaeal NMN adenylyltransferase family.</text>
</comment>
<comment type="sequence caution" evidence="2">
    <conflict type="erroneous initiation">
        <sequence resource="EMBL-CDS" id="CAB56641"/>
    </conflict>
</comment>
<evidence type="ECO:0000250" key="1"/>
<evidence type="ECO:0000305" key="2"/>
<keyword id="KW-0067">ATP-binding</keyword>
<keyword id="KW-0963">Cytoplasm</keyword>
<keyword id="KW-0520">NAD</keyword>
<keyword id="KW-0547">Nucleotide-binding</keyword>
<keyword id="KW-0548">Nucleotidyltransferase</keyword>
<keyword id="KW-0662">Pyridine nucleotide biosynthesis</keyword>
<keyword id="KW-0808">Transferase</keyword>